<protein>
    <recommendedName>
        <fullName>Protocadherin gamma-B4</fullName>
        <shortName>PCDH-gamma-B4</shortName>
    </recommendedName>
    <alternativeName>
        <fullName>Cadherin-20</fullName>
    </alternativeName>
    <alternativeName>
        <fullName>Fibroblast cadherin-2</fullName>
    </alternativeName>
</protein>
<accession>Q9UN71</accession>
<accession>O15099</accession>
<accession>Q2M267</accession>
<accession>Q9UN64</accession>
<gene>
    <name type="primary">PCDHGB4</name>
    <name type="synonym">CDH20</name>
    <name type="synonym">FIB2</name>
</gene>
<evidence type="ECO:0000250" key="1"/>
<evidence type="ECO:0000255" key="2"/>
<evidence type="ECO:0000255" key="3">
    <source>
        <dbReference type="PROSITE-ProRule" id="PRU00043"/>
    </source>
</evidence>
<evidence type="ECO:0000256" key="4">
    <source>
        <dbReference type="SAM" id="MobiDB-lite"/>
    </source>
</evidence>
<evidence type="ECO:0000303" key="5">
    <source>
    </source>
</evidence>
<evidence type="ECO:0000303" key="6">
    <source>
    </source>
</evidence>
<sequence>MGSGAGELGRAERLPVLFLFLLSLFCPALCEQIRYRIPEEMPKGSVVGNLATDLGFSVQELPTRKLRVSSEKPYFTVSAESGELLVSSRLDREEICGKKPACALEFEAVAENPLNFYHVNVEIEDINDHTPKFTQNSFELQISESAQPGTRFILGSAHDADIGSNTLQNYQLSPSDHFSLINKEKSDGSKYPEMVLKTPLDREKQKSYHLTLTALDFGAPPLSSTAQIHVLVTDANDNAPVFSQDVYRVSLSENVYPGTTVLQVTATDQDEGVNAEITFSFSEASQITQFDLNSNTGEITVLNTLDFEEVKEYSIVLEARDGGGMIAQCTVEVEVIDENDNAPEVIFQSLPNLIMEDAELGTHIALLKVRDKDSRHNGEVTCKLEGDVPFKILTSSRNTYKLVTDAVLDREQNPEYNITVTATDRGKPPLSSSSSITLHIGDVNDNAPVFSQSSYIVHVAENNPPGASISQVRASDPDLGPNGQVSYCIMASDLEQRELSSYVSISAESGVVFAQRAFDHEQLRAFELTLQARDQGSPALSANVSLRVLVDDRNDNAPRVLYPALGPDGSALFDMVPHAAEPGYLVTKVVAVDADSGHNAWLSYHVLQASEPGLFSLGLRTGEVRTARALGDRDAVRQRLLVAVRDGGQPPLSATATLHLVFADSLQEVLPDITDRPDPSDLQAELQFYLVVALALISVLFLVAMILAIALRLRRSSSPASWSCFQPGLCVKSESVVPPNYSEGTLPYSYNLCVAHTGKTEFNFLKCSEQLSSGQDILCGDSSGALFPLCNSSELTSHQQAPPNTDWRFSQAQRPGTSGSQNGDDTGTWPNNQFDTEMLQAMILASASEAADGSSTLGGGAGTMGLSARYGPQFTLQHVPDYRQNVYIPGSNATLTNAAGKRDGKAPAGGNGNKKKSGKKEKK</sequence>
<name>PCDGG_HUMAN</name>
<feature type="signal peptide" evidence="2">
    <location>
        <begin position="1"/>
        <end position="30"/>
    </location>
</feature>
<feature type="chain" id="PRO_0000003977" description="Protocadherin gamma-B4">
    <location>
        <begin position="31"/>
        <end position="923"/>
    </location>
</feature>
<feature type="topological domain" description="Extracellular" evidence="2">
    <location>
        <begin position="31"/>
        <end position="689"/>
    </location>
</feature>
<feature type="transmembrane region" description="Helical" evidence="2">
    <location>
        <begin position="690"/>
        <end position="710"/>
    </location>
</feature>
<feature type="topological domain" description="Cytoplasmic" evidence="2">
    <location>
        <begin position="711"/>
        <end position="923"/>
    </location>
</feature>
<feature type="domain" description="Cadherin 1" evidence="3">
    <location>
        <begin position="31"/>
        <end position="133"/>
    </location>
</feature>
<feature type="domain" description="Cadherin 2" evidence="3">
    <location>
        <begin position="134"/>
        <end position="242"/>
    </location>
</feature>
<feature type="domain" description="Cadherin 3" evidence="3">
    <location>
        <begin position="243"/>
        <end position="345"/>
    </location>
</feature>
<feature type="domain" description="Cadherin 4" evidence="3">
    <location>
        <begin position="346"/>
        <end position="450"/>
    </location>
</feature>
<feature type="domain" description="Cadherin 5" evidence="3">
    <location>
        <begin position="451"/>
        <end position="560"/>
    </location>
</feature>
<feature type="domain" description="Cadherin 6" evidence="3">
    <location>
        <begin position="568"/>
        <end position="673"/>
    </location>
</feature>
<feature type="region of interest" description="Disordered" evidence="4">
    <location>
        <begin position="797"/>
        <end position="832"/>
    </location>
</feature>
<feature type="region of interest" description="Disordered" evidence="4">
    <location>
        <begin position="893"/>
        <end position="923"/>
    </location>
</feature>
<feature type="compositionally biased region" description="Basic residues" evidence="4">
    <location>
        <begin position="913"/>
        <end position="923"/>
    </location>
</feature>
<feature type="glycosylation site" description="N-linked (GlcNAc...) asparagine" evidence="2">
    <location>
        <position position="417"/>
    </location>
</feature>
<feature type="glycosylation site" description="N-linked (GlcNAc...) asparagine" evidence="2">
    <location>
        <position position="543"/>
    </location>
</feature>
<feature type="splice variant" id="VSP_008690" description="In isoform 2." evidence="5 6">
    <original>QAPP</original>
    <variation>VSFL</variation>
    <location>
        <begin position="800"/>
        <end position="803"/>
    </location>
</feature>
<feature type="splice variant" id="VSP_008691" description="In isoform 2." evidence="5 6">
    <location>
        <begin position="804"/>
        <end position="923"/>
    </location>
</feature>
<dbReference type="EMBL" id="AF152333">
    <property type="protein sequence ID" value="AAD43727.1"/>
    <property type="molecule type" value="mRNA"/>
</dbReference>
<dbReference type="EMBL" id="AF152520">
    <property type="protein sequence ID" value="AAD43780.1"/>
    <property type="molecule type" value="mRNA"/>
</dbReference>
<dbReference type="EMBL" id="CH471062">
    <property type="protein sequence ID" value="EAW61927.1"/>
    <property type="molecule type" value="Genomic_DNA"/>
</dbReference>
<dbReference type="EMBL" id="BC112088">
    <property type="protein sequence ID" value="AAI12089.1"/>
    <property type="molecule type" value="mRNA"/>
</dbReference>
<dbReference type="EMBL" id="BC113607">
    <property type="protein sequence ID" value="AAI13608.1"/>
    <property type="molecule type" value="mRNA"/>
</dbReference>
<dbReference type="EMBL" id="AB000896">
    <property type="protein sequence ID" value="BAA21134.1"/>
    <property type="molecule type" value="mRNA"/>
</dbReference>
<dbReference type="CCDS" id="CCDS54928.1">
    <molecule id="Q9UN71-1"/>
</dbReference>
<dbReference type="CCDS" id="CCDS75337.1">
    <molecule id="Q9UN71-2"/>
</dbReference>
<dbReference type="PIR" id="PC4298">
    <property type="entry name" value="PC4298"/>
</dbReference>
<dbReference type="RefSeq" id="NP_003727.1">
    <molecule id="Q9UN71-1"/>
    <property type="nucleotide sequence ID" value="NM_003736.4"/>
</dbReference>
<dbReference type="RefSeq" id="NP_115269.1">
    <molecule id="Q9UN71-2"/>
    <property type="nucleotide sequence ID" value="NM_032098.1"/>
</dbReference>
<dbReference type="SMR" id="Q9UN71"/>
<dbReference type="BioGRID" id="114193">
    <property type="interactions" value="61"/>
</dbReference>
<dbReference type="FunCoup" id="Q9UN71">
    <property type="interactions" value="109"/>
</dbReference>
<dbReference type="IntAct" id="Q9UN71">
    <property type="interactions" value="61"/>
</dbReference>
<dbReference type="MINT" id="Q9UN71"/>
<dbReference type="STRING" id="9606.ENSP00000428288"/>
<dbReference type="GlyConnect" id="1688">
    <property type="glycosylation" value="4 N-Linked glycans (1 site)"/>
</dbReference>
<dbReference type="GlyCosmos" id="Q9UN71">
    <property type="glycosylation" value="2 sites, 3 glycans"/>
</dbReference>
<dbReference type="GlyGen" id="Q9UN71">
    <property type="glycosylation" value="2 sites, 4 N-linked glycans (1 site)"/>
</dbReference>
<dbReference type="iPTMnet" id="Q9UN71"/>
<dbReference type="PhosphoSitePlus" id="Q9UN71"/>
<dbReference type="SwissPalm" id="Q9UN71"/>
<dbReference type="BioMuta" id="PCDHGB4"/>
<dbReference type="DMDM" id="37999814"/>
<dbReference type="jPOST" id="Q9UN71"/>
<dbReference type="MassIVE" id="Q9UN71"/>
<dbReference type="PaxDb" id="9606-ENSP00000428288"/>
<dbReference type="PeptideAtlas" id="Q9UN71"/>
<dbReference type="ProteomicsDB" id="85257">
    <molecule id="Q9UN71-1"/>
</dbReference>
<dbReference type="ProteomicsDB" id="85258">
    <molecule id="Q9UN71-2"/>
</dbReference>
<dbReference type="Antibodypedia" id="56131">
    <property type="antibodies" value="106 antibodies from 15 providers"/>
</dbReference>
<dbReference type="DNASU" id="8641"/>
<dbReference type="Ensembl" id="ENST00000519479.2">
    <molecule id="Q9UN71-1"/>
    <property type="protein sequence ID" value="ENSP00000428288.1"/>
    <property type="gene ID" value="ENSG00000253953.3"/>
</dbReference>
<dbReference type="Ensembl" id="ENST00000615384.1">
    <molecule id="Q9UN71-2"/>
    <property type="protein sequence ID" value="ENSP00000484560.1"/>
    <property type="gene ID" value="ENSG00000253953.3"/>
</dbReference>
<dbReference type="GeneID" id="8641"/>
<dbReference type="KEGG" id="hsa:8641"/>
<dbReference type="MANE-Select" id="ENST00000519479.2">
    <property type="protein sequence ID" value="ENSP00000428288.1"/>
    <property type="RefSeq nucleotide sequence ID" value="NM_003736.4"/>
    <property type="RefSeq protein sequence ID" value="NP_003727.1"/>
</dbReference>
<dbReference type="UCSC" id="uc003lkc.3">
    <molecule id="Q9UN71-1"/>
    <property type="organism name" value="human"/>
</dbReference>
<dbReference type="AGR" id="HGNC:8711"/>
<dbReference type="CTD" id="8641"/>
<dbReference type="DisGeNET" id="8641"/>
<dbReference type="GeneCards" id="PCDHGB4"/>
<dbReference type="HGNC" id="HGNC:8711">
    <property type="gene designation" value="PCDHGB4"/>
</dbReference>
<dbReference type="HPA" id="ENSG00000253953">
    <property type="expression patterns" value="Low tissue specificity"/>
</dbReference>
<dbReference type="MalaCards" id="PCDHGB4"/>
<dbReference type="MIM" id="603058">
    <property type="type" value="gene"/>
</dbReference>
<dbReference type="MIM" id="604968">
    <property type="type" value="gene"/>
</dbReference>
<dbReference type="neXtProt" id="NX_Q9UN71"/>
<dbReference type="OpenTargets" id="ENSG00000253953"/>
<dbReference type="PharmGKB" id="PA33059"/>
<dbReference type="VEuPathDB" id="HostDB:ENSG00000253953"/>
<dbReference type="eggNOG" id="KOG3594">
    <property type="taxonomic scope" value="Eukaryota"/>
</dbReference>
<dbReference type="GeneTree" id="ENSGT00940000156683"/>
<dbReference type="HOGENOM" id="CLU_006480_3_0_1"/>
<dbReference type="InParanoid" id="Q9UN71"/>
<dbReference type="OMA" id="CFQSEVV"/>
<dbReference type="OrthoDB" id="6252479at2759"/>
<dbReference type="PAN-GO" id="Q9UN71">
    <property type="GO annotations" value="2 GO annotations based on evolutionary models"/>
</dbReference>
<dbReference type="PhylomeDB" id="Q9UN71"/>
<dbReference type="TreeFam" id="TF332299"/>
<dbReference type="PathwayCommons" id="Q9UN71"/>
<dbReference type="SignaLink" id="Q9UN71"/>
<dbReference type="SIGNOR" id="Q9UN71"/>
<dbReference type="BioGRID-ORCS" id="8641">
    <property type="hits" value="8 hits in 1096 CRISPR screens"/>
</dbReference>
<dbReference type="GenomeRNAi" id="8641"/>
<dbReference type="Pharos" id="Q9UN71">
    <property type="development level" value="Tbio"/>
</dbReference>
<dbReference type="PRO" id="PR:Q9UN71"/>
<dbReference type="Proteomes" id="UP000005640">
    <property type="component" value="Chromosome 5"/>
</dbReference>
<dbReference type="RNAct" id="Q9UN71">
    <property type="molecule type" value="protein"/>
</dbReference>
<dbReference type="Bgee" id="ENSG00000253953">
    <property type="expression patterns" value="Expressed in stromal cell of endometrium and 106 other cell types or tissues"/>
</dbReference>
<dbReference type="GO" id="GO:0016020">
    <property type="term" value="C:membrane"/>
    <property type="evidence" value="ECO:0000303"/>
    <property type="project" value="UniProtKB"/>
</dbReference>
<dbReference type="GO" id="GO:0005886">
    <property type="term" value="C:plasma membrane"/>
    <property type="evidence" value="ECO:0000318"/>
    <property type="project" value="GO_Central"/>
</dbReference>
<dbReference type="GO" id="GO:0005509">
    <property type="term" value="F:calcium ion binding"/>
    <property type="evidence" value="ECO:0007669"/>
    <property type="project" value="InterPro"/>
</dbReference>
<dbReference type="GO" id="GO:0016339">
    <property type="term" value="P:calcium-dependent cell-cell adhesion via plasma membrane cell adhesion molecules"/>
    <property type="evidence" value="ECO:0000303"/>
    <property type="project" value="UniProtKB"/>
</dbReference>
<dbReference type="GO" id="GO:0007155">
    <property type="term" value="P:cell adhesion"/>
    <property type="evidence" value="ECO:0000318"/>
    <property type="project" value="GO_Central"/>
</dbReference>
<dbReference type="GO" id="GO:0007156">
    <property type="term" value="P:homophilic cell adhesion via plasma membrane adhesion molecules"/>
    <property type="evidence" value="ECO:0007669"/>
    <property type="project" value="InterPro"/>
</dbReference>
<dbReference type="GO" id="GO:0007399">
    <property type="term" value="P:nervous system development"/>
    <property type="evidence" value="ECO:0007669"/>
    <property type="project" value="UniProtKB-ARBA"/>
</dbReference>
<dbReference type="CDD" id="cd11304">
    <property type="entry name" value="Cadherin_repeat"/>
    <property type="match status" value="6"/>
</dbReference>
<dbReference type="FunFam" id="2.60.40.60:FF:000004">
    <property type="entry name" value="Protocadherin 1 gamma 2"/>
    <property type="match status" value="1"/>
</dbReference>
<dbReference type="FunFam" id="2.60.40.60:FF:000001">
    <property type="entry name" value="Protocadherin alpha 2"/>
    <property type="match status" value="1"/>
</dbReference>
<dbReference type="FunFam" id="2.60.40.60:FF:000002">
    <property type="entry name" value="Protocadherin alpha 2"/>
    <property type="match status" value="1"/>
</dbReference>
<dbReference type="FunFam" id="2.60.40.60:FF:000006">
    <property type="entry name" value="Protocadherin alpha 2"/>
    <property type="match status" value="1"/>
</dbReference>
<dbReference type="FunFam" id="2.60.40.60:FF:000129">
    <property type="entry name" value="protocadherin alpha-C2 isoform X1"/>
    <property type="match status" value="1"/>
</dbReference>
<dbReference type="FunFam" id="2.60.40.60:FF:000018">
    <property type="entry name" value="Protocadherin gamma c3"/>
    <property type="match status" value="1"/>
</dbReference>
<dbReference type="Gene3D" id="2.60.40.60">
    <property type="entry name" value="Cadherins"/>
    <property type="match status" value="6"/>
</dbReference>
<dbReference type="InterPro" id="IPR002126">
    <property type="entry name" value="Cadherin-like_dom"/>
</dbReference>
<dbReference type="InterPro" id="IPR015919">
    <property type="entry name" value="Cadherin-like_sf"/>
</dbReference>
<dbReference type="InterPro" id="IPR032455">
    <property type="entry name" value="Cadherin_C"/>
</dbReference>
<dbReference type="InterPro" id="IPR031904">
    <property type="entry name" value="Cadherin_CBD"/>
</dbReference>
<dbReference type="InterPro" id="IPR020894">
    <property type="entry name" value="Cadherin_CS"/>
</dbReference>
<dbReference type="InterPro" id="IPR013164">
    <property type="entry name" value="Cadherin_N"/>
</dbReference>
<dbReference type="InterPro" id="IPR050174">
    <property type="entry name" value="Protocadherin/Cadherin-CA"/>
</dbReference>
<dbReference type="PANTHER" id="PTHR24028">
    <property type="entry name" value="CADHERIN-87A"/>
    <property type="match status" value="1"/>
</dbReference>
<dbReference type="PANTHER" id="PTHR24028:SF117">
    <property type="entry name" value="PROTOCADHERIN GAMMA-B4"/>
    <property type="match status" value="1"/>
</dbReference>
<dbReference type="Pfam" id="PF00028">
    <property type="entry name" value="Cadherin"/>
    <property type="match status" value="5"/>
</dbReference>
<dbReference type="Pfam" id="PF08266">
    <property type="entry name" value="Cadherin_2"/>
    <property type="match status" value="1"/>
</dbReference>
<dbReference type="Pfam" id="PF16492">
    <property type="entry name" value="Cadherin_C_2"/>
    <property type="match status" value="1"/>
</dbReference>
<dbReference type="Pfam" id="PF15974">
    <property type="entry name" value="Cadherin_tail"/>
    <property type="match status" value="1"/>
</dbReference>
<dbReference type="PRINTS" id="PR00205">
    <property type="entry name" value="CADHERIN"/>
</dbReference>
<dbReference type="SMART" id="SM00112">
    <property type="entry name" value="CA"/>
    <property type="match status" value="6"/>
</dbReference>
<dbReference type="SUPFAM" id="SSF49313">
    <property type="entry name" value="Cadherin-like"/>
    <property type="match status" value="6"/>
</dbReference>
<dbReference type="PROSITE" id="PS00232">
    <property type="entry name" value="CADHERIN_1"/>
    <property type="match status" value="5"/>
</dbReference>
<dbReference type="PROSITE" id="PS50268">
    <property type="entry name" value="CADHERIN_2"/>
    <property type="match status" value="6"/>
</dbReference>
<organism>
    <name type="scientific">Homo sapiens</name>
    <name type="common">Human</name>
    <dbReference type="NCBI Taxonomy" id="9606"/>
    <lineage>
        <taxon>Eukaryota</taxon>
        <taxon>Metazoa</taxon>
        <taxon>Chordata</taxon>
        <taxon>Craniata</taxon>
        <taxon>Vertebrata</taxon>
        <taxon>Euteleostomi</taxon>
        <taxon>Mammalia</taxon>
        <taxon>Eutheria</taxon>
        <taxon>Euarchontoglires</taxon>
        <taxon>Primates</taxon>
        <taxon>Haplorrhini</taxon>
        <taxon>Catarrhini</taxon>
        <taxon>Hominidae</taxon>
        <taxon>Homo</taxon>
    </lineage>
</organism>
<proteinExistence type="evidence at protein level"/>
<reference key="1">
    <citation type="journal article" date="1999" name="Cell">
        <title>A striking organization of a large family of human neural cadherin-like cell adhesion genes.</title>
        <authorList>
            <person name="Wu Q."/>
            <person name="Maniatis T."/>
        </authorList>
    </citation>
    <scope>NUCLEOTIDE SEQUENCE [MRNA] (ISOFORMS 1 AND 2)</scope>
    <source>
        <tissue>Brain</tissue>
    </source>
</reference>
<reference key="2">
    <citation type="submission" date="2005-09" db="EMBL/GenBank/DDBJ databases">
        <authorList>
            <person name="Mural R.J."/>
            <person name="Istrail S."/>
            <person name="Sutton G.G."/>
            <person name="Florea L."/>
            <person name="Halpern A.L."/>
            <person name="Mobarry C.M."/>
            <person name="Lippert R."/>
            <person name="Walenz B."/>
            <person name="Shatkay H."/>
            <person name="Dew I."/>
            <person name="Miller J.R."/>
            <person name="Flanigan M.J."/>
            <person name="Edwards N.J."/>
            <person name="Bolanos R."/>
            <person name="Fasulo D."/>
            <person name="Halldorsson B.V."/>
            <person name="Hannenhalli S."/>
            <person name="Turner R."/>
            <person name="Yooseph S."/>
            <person name="Lu F."/>
            <person name="Nusskern D.R."/>
            <person name="Shue B.C."/>
            <person name="Zheng X.H."/>
            <person name="Zhong F."/>
            <person name="Delcher A.L."/>
            <person name="Huson D.H."/>
            <person name="Kravitz S.A."/>
            <person name="Mouchard L."/>
            <person name="Reinert K."/>
            <person name="Remington K.A."/>
            <person name="Clark A.G."/>
            <person name="Waterman M.S."/>
            <person name="Eichler E.E."/>
            <person name="Adams M.D."/>
            <person name="Hunkapiller M.W."/>
            <person name="Myers E.W."/>
            <person name="Venter J.C."/>
        </authorList>
    </citation>
    <scope>NUCLEOTIDE SEQUENCE [LARGE SCALE GENOMIC DNA]</scope>
</reference>
<reference key="3">
    <citation type="journal article" date="2004" name="Genome Res.">
        <title>The status, quality, and expansion of the NIH full-length cDNA project: the Mammalian Gene Collection (MGC).</title>
        <authorList>
            <consortium name="The MGC Project Team"/>
        </authorList>
    </citation>
    <scope>NUCLEOTIDE SEQUENCE [LARGE SCALE MRNA] (ISOFORM 2)</scope>
    <source>
        <tissue>Lung</tissue>
    </source>
</reference>
<reference key="4">
    <citation type="journal article" date="1997" name="Biochem. Biophys. Res. Commun.">
        <title>Multiple cadherins are expressed in human fibroblasts.</title>
        <authorList>
            <person name="Matsuyoshi N."/>
            <person name="Imamura S."/>
        </authorList>
    </citation>
    <scope>NUCLEOTIDE SEQUENCE [MRNA] OF 94-234</scope>
</reference>
<keyword id="KW-0025">Alternative splicing</keyword>
<keyword id="KW-0106">Calcium</keyword>
<keyword id="KW-0130">Cell adhesion</keyword>
<keyword id="KW-1003">Cell membrane</keyword>
<keyword id="KW-0325">Glycoprotein</keyword>
<keyword id="KW-0472">Membrane</keyword>
<keyword id="KW-1267">Proteomics identification</keyword>
<keyword id="KW-1185">Reference proteome</keyword>
<keyword id="KW-0677">Repeat</keyword>
<keyword id="KW-0732">Signal</keyword>
<keyword id="KW-0812">Transmembrane</keyword>
<keyword id="KW-1133">Transmembrane helix</keyword>
<comment type="function">
    <text>Potential calcium-dependent cell-adhesion protein. May be involved in the establishment and maintenance of specific neuronal connections in the brain.</text>
</comment>
<comment type="subcellular location">
    <subcellularLocation>
        <location evidence="1">Cell membrane</location>
        <topology evidence="1">Single-pass type I membrane protein</topology>
    </subcellularLocation>
</comment>
<comment type="alternative products">
    <event type="alternative splicing"/>
    <isoform>
        <id>Q9UN71-1</id>
        <name>1</name>
        <sequence type="displayed"/>
    </isoform>
    <isoform>
        <id>Q9UN71-2</id>
        <name>2</name>
        <name>Short</name>
        <sequence type="described" ref="VSP_008690 VSP_008691"/>
    </isoform>
</comment>